<reference key="1">
    <citation type="journal article" date="1994" name="Gene">
        <title>Isolation and sequence of the Candida albicans FAS1 gene.</title>
        <authorList>
            <person name="Zhao X.-J."/>
            <person name="Cihlar R.L."/>
        </authorList>
    </citation>
    <scope>NUCLEOTIDE SEQUENCE [GENOMIC DNA]</scope>
    <source>
        <strain>4918</strain>
    </source>
</reference>
<dbReference type="EC" id="2.3.1.86"/>
<dbReference type="EC" id="4.2.1.59"/>
<dbReference type="EC" id="1.3.1.9"/>
<dbReference type="EC" id="2.3.1.38"/>
<dbReference type="EC" id="2.3.1.39"/>
<dbReference type="EC" id="3.1.2.14"/>
<dbReference type="EMBL" id="X74952">
    <property type="protein sequence ID" value="CAA52907.1"/>
    <property type="molecule type" value="Genomic_DNA"/>
</dbReference>
<dbReference type="PIR" id="S37178">
    <property type="entry name" value="S37178"/>
</dbReference>
<dbReference type="PDB" id="6U5V">
    <property type="method" value="EM"/>
    <property type="resolution" value="2.80 A"/>
    <property type="chains" value="B=1-2037"/>
</dbReference>
<dbReference type="PDB" id="6U5W">
    <property type="method" value="EM"/>
    <property type="resolution" value="3.30 A"/>
    <property type="chains" value="B=1-2037"/>
</dbReference>
<dbReference type="PDB" id="7TUI">
    <property type="method" value="EM"/>
    <property type="resolution" value="2.66 A"/>
    <property type="chains" value="B=1-2037"/>
</dbReference>
<dbReference type="PDBsum" id="6U5V"/>
<dbReference type="PDBsum" id="6U5W"/>
<dbReference type="PDBsum" id="7TUI"/>
<dbReference type="EMDB" id="EMD-20657"/>
<dbReference type="EMDB" id="EMD-20658"/>
<dbReference type="EMDB" id="EMD-26132"/>
<dbReference type="SMR" id="P34731"/>
<dbReference type="VEuPathDB" id="FungiDB:C5_00190C_A"/>
<dbReference type="VEuPathDB" id="FungiDB:CAWG_04414"/>
<dbReference type="GO" id="GO:0005829">
    <property type="term" value="C:cytosol"/>
    <property type="evidence" value="ECO:0007669"/>
    <property type="project" value="EnsemblFungi"/>
</dbReference>
<dbReference type="GO" id="GO:0005835">
    <property type="term" value="C:fatty acid synthase complex"/>
    <property type="evidence" value="ECO:0007669"/>
    <property type="project" value="EnsemblFungi"/>
</dbReference>
<dbReference type="GO" id="GO:0005811">
    <property type="term" value="C:lipid droplet"/>
    <property type="evidence" value="ECO:0007669"/>
    <property type="project" value="EnsemblFungi"/>
</dbReference>
<dbReference type="GO" id="GO:0019171">
    <property type="term" value="F:(3R)-hydroxyacyl-[acyl-carrier-protein] dehydratase activity"/>
    <property type="evidence" value="ECO:0007669"/>
    <property type="project" value="UniProtKB-EC"/>
</dbReference>
<dbReference type="GO" id="GO:0004313">
    <property type="term" value="F:[acyl-carrier-protein] S-acetyltransferase activity"/>
    <property type="evidence" value="ECO:0007669"/>
    <property type="project" value="UniProtKB-EC"/>
</dbReference>
<dbReference type="GO" id="GO:0004314">
    <property type="term" value="F:[acyl-carrier-protein] S-malonyltransferase activity"/>
    <property type="evidence" value="ECO:0007669"/>
    <property type="project" value="UniProtKB-EC"/>
</dbReference>
<dbReference type="GO" id="GO:0004318">
    <property type="term" value="F:enoyl-[acyl-carrier-protein] reductase (NADH) activity"/>
    <property type="evidence" value="ECO:0007669"/>
    <property type="project" value="UniProtKB-EC"/>
</dbReference>
<dbReference type="GO" id="GO:0141148">
    <property type="term" value="F:enoyl-[acyl-carrier-protein] reductase (NADPH) activity"/>
    <property type="evidence" value="ECO:0007669"/>
    <property type="project" value="EnsemblFungi"/>
</dbReference>
<dbReference type="GO" id="GO:0004312">
    <property type="term" value="F:fatty acid synthase activity"/>
    <property type="evidence" value="ECO:0007669"/>
    <property type="project" value="EnsemblFungi"/>
</dbReference>
<dbReference type="GO" id="GO:0016297">
    <property type="term" value="F:fatty acyl-[ACP] hydrolase activity"/>
    <property type="evidence" value="ECO:0007669"/>
    <property type="project" value="UniProtKB-EC"/>
</dbReference>
<dbReference type="GO" id="GO:0004321">
    <property type="term" value="F:fatty-acyl-CoA synthase activity"/>
    <property type="evidence" value="ECO:0007669"/>
    <property type="project" value="UniProtKB-EC"/>
</dbReference>
<dbReference type="GO" id="GO:0016409">
    <property type="term" value="F:palmitoyltransferase activity"/>
    <property type="evidence" value="ECO:0007669"/>
    <property type="project" value="EnsemblFungi"/>
</dbReference>
<dbReference type="GO" id="GO:0042759">
    <property type="term" value="P:long-chain fatty acid biosynthetic process"/>
    <property type="evidence" value="ECO:0007669"/>
    <property type="project" value="EnsemblFungi"/>
</dbReference>
<dbReference type="CDD" id="cd03447">
    <property type="entry name" value="FAS_MaoC"/>
    <property type="match status" value="1"/>
</dbReference>
<dbReference type="FunFam" id="1.20.930.70:FF:000001">
    <property type="entry name" value="Fatty acid synthase beta subunit dehydratase"/>
    <property type="match status" value="1"/>
</dbReference>
<dbReference type="FunFam" id="3.10.129.10:FF:000017">
    <property type="entry name" value="Fatty acid synthase beta subunit dehydratase"/>
    <property type="match status" value="1"/>
</dbReference>
<dbReference type="FunFam" id="3.20.20.70:FF:000078">
    <property type="entry name" value="Fatty acid synthase beta subunit dehydratase"/>
    <property type="match status" value="1"/>
</dbReference>
<dbReference type="FunFam" id="3.30.1120.100:FF:000001">
    <property type="entry name" value="Fatty acid synthase beta subunit dehydratase"/>
    <property type="match status" value="1"/>
</dbReference>
<dbReference type="FunFam" id="3.40.366.10:FF:000006">
    <property type="entry name" value="Fatty acid synthase beta subunit dehydratase"/>
    <property type="match status" value="1"/>
</dbReference>
<dbReference type="FunFam" id="3.10.129.10:FF:000015">
    <property type="entry name" value="Fatty acid synthase subunit beta"/>
    <property type="match status" value="1"/>
</dbReference>
<dbReference type="FunFam" id="3.30.70.3330:FF:000001">
    <property type="entry name" value="Fatty acid synthase subunit beta dehydratase"/>
    <property type="match status" value="1"/>
</dbReference>
<dbReference type="FunFam" id="3.40.366.10:FF:000003">
    <property type="entry name" value="Fatty acid synthase subunit beta dehydratase"/>
    <property type="match status" value="1"/>
</dbReference>
<dbReference type="Gene3D" id="1.20.1050.120">
    <property type="match status" value="1"/>
</dbReference>
<dbReference type="Gene3D" id="1.20.930.70">
    <property type="match status" value="1"/>
</dbReference>
<dbReference type="Gene3D" id="3.30.1120.100">
    <property type="match status" value="1"/>
</dbReference>
<dbReference type="Gene3D" id="3.30.70.3330">
    <property type="match status" value="1"/>
</dbReference>
<dbReference type="Gene3D" id="6.10.140.1400">
    <property type="match status" value="1"/>
</dbReference>
<dbReference type="Gene3D" id="6.10.60.10">
    <property type="match status" value="1"/>
</dbReference>
<dbReference type="Gene3D" id="6.20.240.10">
    <property type="match status" value="1"/>
</dbReference>
<dbReference type="Gene3D" id="3.20.20.70">
    <property type="entry name" value="Aldolase class I"/>
    <property type="match status" value="2"/>
</dbReference>
<dbReference type="Gene3D" id="3.10.129.10">
    <property type="entry name" value="Hotdog Thioesterase"/>
    <property type="match status" value="2"/>
</dbReference>
<dbReference type="Gene3D" id="3.40.366.10">
    <property type="entry name" value="Malonyl-Coenzyme A Acyl Carrier Protein, domain 2"/>
    <property type="match status" value="3"/>
</dbReference>
<dbReference type="InterPro" id="IPR001227">
    <property type="entry name" value="Ac_transferase_dom_sf"/>
</dbReference>
<dbReference type="InterPro" id="IPR014043">
    <property type="entry name" value="Acyl_transferase_dom"/>
</dbReference>
<dbReference type="InterPro" id="IPR016035">
    <property type="entry name" value="Acyl_Trfase/lysoPLipase"/>
</dbReference>
<dbReference type="InterPro" id="IPR013785">
    <property type="entry name" value="Aldolase_TIM"/>
</dbReference>
<dbReference type="InterPro" id="IPR039569">
    <property type="entry name" value="FAS1-like_DH_region"/>
</dbReference>
<dbReference type="InterPro" id="IPR016452">
    <property type="entry name" value="Fas1/AflB-like"/>
</dbReference>
<dbReference type="InterPro" id="IPR013565">
    <property type="entry name" value="Fas1/AflB-like_central"/>
</dbReference>
<dbReference type="InterPro" id="IPR041099">
    <property type="entry name" value="FAS1_N"/>
</dbReference>
<dbReference type="InterPro" id="IPR040883">
    <property type="entry name" value="FAS_meander"/>
</dbReference>
<dbReference type="InterPro" id="IPR003965">
    <property type="entry name" value="Fatty_acid_synthase"/>
</dbReference>
<dbReference type="InterPro" id="IPR050830">
    <property type="entry name" value="Fungal_FAS"/>
</dbReference>
<dbReference type="InterPro" id="IPR029069">
    <property type="entry name" value="HotDog_dom_sf"/>
</dbReference>
<dbReference type="InterPro" id="IPR002539">
    <property type="entry name" value="MaoC-like_dom"/>
</dbReference>
<dbReference type="InterPro" id="IPR032088">
    <property type="entry name" value="SAT"/>
</dbReference>
<dbReference type="PANTHER" id="PTHR10982:SF21">
    <property type="entry name" value="FATTY ACID SYNTHASE SUBUNIT BETA"/>
    <property type="match status" value="1"/>
</dbReference>
<dbReference type="PANTHER" id="PTHR10982">
    <property type="entry name" value="MALONYL COA-ACYL CARRIER PROTEIN TRANSACYLASE"/>
    <property type="match status" value="1"/>
</dbReference>
<dbReference type="Pfam" id="PF00698">
    <property type="entry name" value="Acyl_transf_1"/>
    <property type="match status" value="1"/>
</dbReference>
<dbReference type="Pfam" id="PF08354">
    <property type="entry name" value="Fas1-AflB-like_hel"/>
    <property type="match status" value="1"/>
</dbReference>
<dbReference type="Pfam" id="PF13452">
    <property type="entry name" value="FAS1_DH_region"/>
    <property type="match status" value="1"/>
</dbReference>
<dbReference type="Pfam" id="PF22235">
    <property type="entry name" value="FAS1_thioest_ins"/>
    <property type="match status" value="1"/>
</dbReference>
<dbReference type="Pfam" id="PF17951">
    <property type="entry name" value="FAS_meander"/>
    <property type="match status" value="1"/>
</dbReference>
<dbReference type="Pfam" id="PF17828">
    <property type="entry name" value="FAS_N"/>
    <property type="match status" value="1"/>
</dbReference>
<dbReference type="Pfam" id="PF01575">
    <property type="entry name" value="MaoC_dehydratas"/>
    <property type="match status" value="1"/>
</dbReference>
<dbReference type="Pfam" id="PF16073">
    <property type="entry name" value="SAT"/>
    <property type="match status" value="1"/>
</dbReference>
<dbReference type="PIRSF" id="PIRSF005562">
    <property type="entry name" value="FAS_yeast_beta"/>
    <property type="match status" value="1"/>
</dbReference>
<dbReference type="PRINTS" id="PR01483">
    <property type="entry name" value="FASYNTHASE"/>
</dbReference>
<dbReference type="SMART" id="SM00827">
    <property type="entry name" value="PKS_AT"/>
    <property type="match status" value="1"/>
</dbReference>
<dbReference type="SUPFAM" id="SSF52151">
    <property type="entry name" value="FabD/lysophospholipase-like"/>
    <property type="match status" value="2"/>
</dbReference>
<dbReference type="SUPFAM" id="SSF51412">
    <property type="entry name" value="Inosine monophosphate dehydrogenase (IMPDH)"/>
    <property type="match status" value="1"/>
</dbReference>
<dbReference type="SUPFAM" id="SSF54637">
    <property type="entry name" value="Thioesterase/thiol ester dehydrase-isomerase"/>
    <property type="match status" value="2"/>
</dbReference>
<feature type="chain" id="PRO_0000180280" description="Fatty acid synthase subunit beta">
    <location>
        <begin position="1"/>
        <end position="2037"/>
    </location>
</feature>
<feature type="domain" description="MaoC-like">
    <location>
        <begin position="1506"/>
        <end position="1634"/>
    </location>
</feature>
<feature type="region of interest" description="Acetyltransferase" evidence="1">
    <location>
        <begin position="1"/>
        <end position="453"/>
    </location>
</feature>
<feature type="region of interest" description="Enoyl reductase" evidence="1">
    <location>
        <begin position="465"/>
        <end position="798"/>
    </location>
</feature>
<feature type="region of interest" description="Dehydratase" evidence="1">
    <location>
        <begin position="1132"/>
        <end position="1612"/>
    </location>
</feature>
<feature type="region of interest" description="Malonyl/palmitoyl transferase" evidence="1">
    <location>
        <begin position="1613"/>
        <end position="1833"/>
    </location>
</feature>
<feature type="active site" description="For acetyltransferase activity" evidence="1">
    <location>
        <position position="261"/>
    </location>
</feature>
<feature type="active site" description="For malonyltransferase activity" evidence="1">
    <location>
        <position position="1796"/>
    </location>
</feature>
<feature type="strand" evidence="5">
    <location>
        <begin position="6"/>
        <end position="11"/>
    </location>
</feature>
<feature type="strand" evidence="5">
    <location>
        <begin position="14"/>
        <end position="19"/>
    </location>
</feature>
<feature type="helix" evidence="5">
    <location>
        <begin position="22"/>
        <end position="24"/>
    </location>
</feature>
<feature type="helix" evidence="5">
    <location>
        <begin position="25"/>
        <end position="35"/>
    </location>
</feature>
<feature type="helix" evidence="5">
    <location>
        <begin position="36"/>
        <end position="38"/>
    </location>
</feature>
<feature type="turn" evidence="5">
    <location>
        <begin position="44"/>
        <end position="46"/>
    </location>
</feature>
<feature type="strand" evidence="3">
    <location>
        <begin position="49"/>
        <end position="51"/>
    </location>
</feature>
<feature type="helix" evidence="5">
    <location>
        <begin position="55"/>
        <end position="65"/>
    </location>
</feature>
<feature type="strand" evidence="5">
    <location>
        <begin position="68"/>
        <end position="70"/>
    </location>
</feature>
<feature type="helix" evidence="5">
    <location>
        <begin position="75"/>
        <end position="86"/>
    </location>
</feature>
<feature type="helix" evidence="5">
    <location>
        <begin position="94"/>
        <end position="103"/>
    </location>
</feature>
<feature type="strand" evidence="5">
    <location>
        <begin position="105"/>
        <end position="107"/>
    </location>
</feature>
<feature type="helix" evidence="5">
    <location>
        <begin position="112"/>
        <end position="115"/>
    </location>
</feature>
<feature type="turn" evidence="5">
    <location>
        <begin position="116"/>
        <end position="118"/>
    </location>
</feature>
<feature type="helix" evidence="5">
    <location>
        <begin position="119"/>
        <end position="125"/>
    </location>
</feature>
<feature type="turn" evidence="5">
    <location>
        <begin position="137"/>
        <end position="139"/>
    </location>
</feature>
<feature type="turn" evidence="5">
    <location>
        <begin position="141"/>
        <end position="143"/>
    </location>
</feature>
<feature type="strand" evidence="5">
    <location>
        <begin position="146"/>
        <end position="150"/>
    </location>
</feature>
<feature type="helix" evidence="5">
    <location>
        <begin position="160"/>
        <end position="169"/>
    </location>
</feature>
<feature type="helix" evidence="5">
    <location>
        <begin position="171"/>
        <end position="188"/>
    </location>
</feature>
<feature type="helix" evidence="5">
    <location>
        <begin position="189"/>
        <end position="192"/>
    </location>
</feature>
<feature type="turn" evidence="3">
    <location>
        <begin position="193"/>
        <end position="195"/>
    </location>
</feature>
<feature type="helix" evidence="5">
    <location>
        <begin position="202"/>
        <end position="207"/>
    </location>
</feature>
<feature type="helix" evidence="5">
    <location>
        <begin position="209"/>
        <end position="211"/>
    </location>
</feature>
<feature type="helix" evidence="5">
    <location>
        <begin position="215"/>
        <end position="218"/>
    </location>
</feature>
<feature type="helix" evidence="5">
    <location>
        <begin position="221"/>
        <end position="242"/>
    </location>
</feature>
<feature type="helix" evidence="5">
    <location>
        <begin position="247"/>
        <end position="250"/>
    </location>
</feature>
<feature type="turn" evidence="5">
    <location>
        <begin position="251"/>
        <end position="253"/>
    </location>
</feature>
<feature type="strand" evidence="5">
    <location>
        <begin position="255"/>
        <end position="259"/>
    </location>
</feature>
<feature type="turn" evidence="5">
    <location>
        <begin position="261"/>
        <end position="263"/>
    </location>
</feature>
<feature type="helix" evidence="5">
    <location>
        <begin position="264"/>
        <end position="272"/>
    </location>
</feature>
<feature type="helix" evidence="5">
    <location>
        <begin position="276"/>
        <end position="300"/>
    </location>
</feature>
<feature type="helix" evidence="5">
    <location>
        <begin position="308"/>
        <end position="316"/>
    </location>
</feature>
<feature type="strand" evidence="5">
    <location>
        <begin position="324"/>
        <end position="330"/>
    </location>
</feature>
<feature type="helix" evidence="5">
    <location>
        <begin position="333"/>
        <end position="344"/>
    </location>
</feature>
<feature type="strand" evidence="5">
    <location>
        <begin position="349"/>
        <end position="351"/>
    </location>
</feature>
<feature type="strand" evidence="5">
    <location>
        <begin position="354"/>
        <end position="360"/>
    </location>
</feature>
<feature type="strand" evidence="5">
    <location>
        <begin position="363"/>
        <end position="368"/>
    </location>
</feature>
<feature type="helix" evidence="5">
    <location>
        <begin position="370"/>
        <end position="383"/>
    </location>
</feature>
<feature type="helix" evidence="5">
    <location>
        <begin position="387"/>
        <end position="389"/>
    </location>
</feature>
<feature type="helix" evidence="5">
    <location>
        <begin position="391"/>
        <end position="393"/>
    </location>
</feature>
<feature type="helix" evidence="5">
    <location>
        <begin position="396"/>
        <end position="398"/>
    </location>
</feature>
<feature type="strand" evidence="3">
    <location>
        <begin position="405"/>
        <end position="407"/>
    </location>
</feature>
<feature type="helix" evidence="5">
    <location>
        <begin position="417"/>
        <end position="419"/>
    </location>
</feature>
<feature type="helix" evidence="5">
    <location>
        <begin position="422"/>
        <end position="432"/>
    </location>
</feature>
<feature type="strand" evidence="5">
    <location>
        <begin position="447"/>
        <end position="449"/>
    </location>
</feature>
<feature type="strand" evidence="5">
    <location>
        <begin position="452"/>
        <end position="455"/>
    </location>
</feature>
<feature type="helix" evidence="5">
    <location>
        <begin position="461"/>
        <end position="469"/>
    </location>
</feature>
<feature type="helix" evidence="5">
    <location>
        <begin position="475"/>
        <end position="478"/>
    </location>
</feature>
<feature type="strand" evidence="5">
    <location>
        <begin position="484"/>
        <end position="488"/>
    </location>
</feature>
<feature type="helix" evidence="5">
    <location>
        <begin position="493"/>
        <end position="495"/>
    </location>
</feature>
<feature type="helix" evidence="5">
    <location>
        <begin position="497"/>
        <end position="502"/>
    </location>
</feature>
<feature type="turn" evidence="3">
    <location>
        <begin position="505"/>
        <end position="507"/>
    </location>
</feature>
<feature type="strand" evidence="5">
    <location>
        <begin position="511"/>
        <end position="514"/>
    </location>
</feature>
<feature type="strand" evidence="5">
    <location>
        <begin position="526"/>
        <end position="528"/>
    </location>
</feature>
<feature type="helix" evidence="5">
    <location>
        <begin position="530"/>
        <end position="533"/>
    </location>
</feature>
<feature type="strand" evidence="5">
    <location>
        <begin position="538"/>
        <end position="541"/>
    </location>
</feature>
<feature type="turn" evidence="5">
    <location>
        <begin position="548"/>
        <end position="550"/>
    </location>
</feature>
<feature type="strand" evidence="5">
    <location>
        <begin position="555"/>
        <end position="558"/>
    </location>
</feature>
<feature type="strand" evidence="5">
    <location>
        <begin position="564"/>
        <end position="568"/>
    </location>
</feature>
<feature type="helix" evidence="5">
    <location>
        <begin position="571"/>
        <end position="574"/>
    </location>
</feature>
<feature type="strand" evidence="5">
    <location>
        <begin position="578"/>
        <end position="581"/>
    </location>
</feature>
<feature type="turn" evidence="5">
    <location>
        <begin position="585"/>
        <end position="589"/>
    </location>
</feature>
<feature type="helix" evidence="5">
    <location>
        <begin position="591"/>
        <end position="598"/>
    </location>
</feature>
<feature type="turn" evidence="5">
    <location>
        <begin position="599"/>
        <end position="601"/>
    </location>
</feature>
<feature type="strand" evidence="5">
    <location>
        <begin position="603"/>
        <end position="607"/>
    </location>
</feature>
<feature type="helix" evidence="5">
    <location>
        <begin position="608"/>
        <end position="610"/>
    </location>
</feature>
<feature type="helix" evidence="5">
    <location>
        <begin position="614"/>
        <end position="627"/>
    </location>
</feature>
<feature type="strand" evidence="5">
    <location>
        <begin position="634"/>
        <end position="638"/>
    </location>
</feature>
<feature type="helix" evidence="5">
    <location>
        <begin position="643"/>
        <end position="659"/>
    </location>
</feature>
<feature type="strand" evidence="5">
    <location>
        <begin position="662"/>
        <end position="668"/>
    </location>
</feature>
<feature type="helix" evidence="5">
    <location>
        <begin position="675"/>
        <end position="683"/>
    </location>
</feature>
<feature type="strand" evidence="5">
    <location>
        <begin position="688"/>
        <end position="692"/>
    </location>
</feature>
<feature type="helix" evidence="5">
    <location>
        <begin position="697"/>
        <end position="709"/>
    </location>
</feature>
<feature type="strand" evidence="3">
    <location>
        <begin position="715"/>
        <end position="719"/>
    </location>
</feature>
<feature type="strand" evidence="5">
    <location>
        <begin position="722"/>
        <end position="724"/>
    </location>
</feature>
<feature type="helix" evidence="5">
    <location>
        <begin position="735"/>
        <end position="738"/>
    </location>
</feature>
<feature type="helix" evidence="5">
    <location>
        <begin position="741"/>
        <end position="744"/>
    </location>
</feature>
<feature type="strand" evidence="3">
    <location>
        <begin position="750"/>
        <end position="754"/>
    </location>
</feature>
<feature type="helix" evidence="5">
    <location>
        <begin position="761"/>
        <end position="769"/>
    </location>
</feature>
<feature type="helix" evidence="5">
    <location>
        <begin position="771"/>
        <end position="773"/>
    </location>
</feature>
<feature type="turn" evidence="5">
    <location>
        <begin position="774"/>
        <end position="777"/>
    </location>
</feature>
<feature type="strand" evidence="5">
    <location>
        <begin position="784"/>
        <end position="792"/>
    </location>
</feature>
<feature type="strand" evidence="5">
    <location>
        <begin position="795"/>
        <end position="797"/>
    </location>
</feature>
<feature type="helix" evidence="5">
    <location>
        <begin position="802"/>
        <end position="810"/>
    </location>
</feature>
<feature type="helix" evidence="5">
    <location>
        <begin position="816"/>
        <end position="821"/>
    </location>
</feature>
<feature type="turn" evidence="5">
    <location>
        <begin position="822"/>
        <end position="824"/>
    </location>
</feature>
<feature type="strand" evidence="5">
    <location>
        <begin position="830"/>
        <end position="834"/>
    </location>
</feature>
<feature type="strand" evidence="5">
    <location>
        <begin position="836"/>
        <end position="838"/>
    </location>
</feature>
<feature type="strand" evidence="5">
    <location>
        <begin position="840"/>
        <end position="844"/>
    </location>
</feature>
<feature type="helix" evidence="5">
    <location>
        <begin position="847"/>
        <end position="858"/>
    </location>
</feature>
<feature type="turn" evidence="5">
    <location>
        <begin position="859"/>
        <end position="861"/>
    </location>
</feature>
<feature type="helix" evidence="5">
    <location>
        <begin position="864"/>
        <end position="885"/>
    </location>
</feature>
<feature type="strand" evidence="5">
    <location>
        <begin position="886"/>
        <end position="888"/>
    </location>
</feature>
<feature type="strand" evidence="5">
    <location>
        <begin position="895"/>
        <end position="897"/>
    </location>
</feature>
<feature type="helix" evidence="5">
    <location>
        <begin position="901"/>
        <end position="903"/>
    </location>
</feature>
<feature type="helix" evidence="5">
    <location>
        <begin position="906"/>
        <end position="917"/>
    </location>
</feature>
<feature type="turn" evidence="5">
    <location>
        <begin position="920"/>
        <end position="923"/>
    </location>
</feature>
<feature type="strand" evidence="5">
    <location>
        <begin position="924"/>
        <end position="926"/>
    </location>
</feature>
<feature type="helix" evidence="5">
    <location>
        <begin position="928"/>
        <end position="944"/>
    </location>
</feature>
<feature type="helix" evidence="5">
    <location>
        <begin position="958"/>
        <end position="961"/>
    </location>
</feature>
<feature type="helix" evidence="5">
    <location>
        <begin position="964"/>
        <end position="974"/>
    </location>
</feature>
<feature type="helix" evidence="5">
    <location>
        <begin position="976"/>
        <end position="978"/>
    </location>
</feature>
<feature type="helix" evidence="5">
    <location>
        <begin position="985"/>
        <end position="995"/>
    </location>
</feature>
<feature type="strand" evidence="5">
    <location>
        <begin position="998"/>
        <end position="1000"/>
    </location>
</feature>
<feature type="strand" evidence="5">
    <location>
        <begin position="1004"/>
        <end position="1006"/>
    </location>
</feature>
<feature type="helix" evidence="5">
    <location>
        <begin position="1013"/>
        <end position="1018"/>
    </location>
</feature>
<feature type="turn" evidence="5">
    <location>
        <begin position="1024"/>
        <end position="1026"/>
    </location>
</feature>
<feature type="turn" evidence="5">
    <location>
        <begin position="1028"/>
        <end position="1030"/>
    </location>
</feature>
<feature type="strand" evidence="4">
    <location>
        <begin position="1031"/>
        <end position="1033"/>
    </location>
</feature>
<feature type="turn" evidence="5">
    <location>
        <begin position="1036"/>
        <end position="1038"/>
    </location>
</feature>
<feature type="turn" evidence="5">
    <location>
        <begin position="1045"/>
        <end position="1050"/>
    </location>
</feature>
<feature type="strand" evidence="3">
    <location>
        <begin position="1053"/>
        <end position="1055"/>
    </location>
</feature>
<feature type="helix" evidence="5">
    <location>
        <begin position="1058"/>
        <end position="1077"/>
    </location>
</feature>
<feature type="strand" evidence="4">
    <location>
        <begin position="1092"/>
        <end position="1094"/>
    </location>
</feature>
<feature type="strand" evidence="5">
    <location>
        <begin position="1096"/>
        <end position="1098"/>
    </location>
</feature>
<feature type="strand" evidence="4">
    <location>
        <begin position="1100"/>
        <end position="1102"/>
    </location>
</feature>
<feature type="helix" evidence="5">
    <location>
        <begin position="1103"/>
        <end position="1105"/>
    </location>
</feature>
<feature type="strand" evidence="5">
    <location>
        <begin position="1113"/>
        <end position="1115"/>
    </location>
</feature>
<feature type="strand" evidence="5">
    <location>
        <begin position="1118"/>
        <end position="1120"/>
    </location>
</feature>
<feature type="helix" evidence="5">
    <location>
        <begin position="1123"/>
        <end position="1131"/>
    </location>
</feature>
<feature type="helix" evidence="5">
    <location>
        <begin position="1137"/>
        <end position="1143"/>
    </location>
</feature>
<feature type="strand" evidence="5">
    <location>
        <begin position="1145"/>
        <end position="1151"/>
    </location>
</feature>
<feature type="strand" evidence="5">
    <location>
        <begin position="1153"/>
        <end position="1155"/>
    </location>
</feature>
<feature type="helix" evidence="5">
    <location>
        <begin position="1157"/>
        <end position="1161"/>
    </location>
</feature>
<feature type="strand" evidence="5">
    <location>
        <begin position="1168"/>
        <end position="1171"/>
    </location>
</feature>
<feature type="helix" evidence="5">
    <location>
        <begin position="1173"/>
        <end position="1176"/>
    </location>
</feature>
<feature type="strand" evidence="5">
    <location>
        <begin position="1178"/>
        <end position="1185"/>
    </location>
</feature>
<feature type="strand" evidence="5">
    <location>
        <begin position="1188"/>
        <end position="1197"/>
    </location>
</feature>
<feature type="turn" evidence="3">
    <location>
        <begin position="1199"/>
        <end position="1201"/>
    </location>
</feature>
<feature type="strand" evidence="5">
    <location>
        <begin position="1203"/>
        <end position="1209"/>
    </location>
</feature>
<feature type="strand" evidence="5">
    <location>
        <begin position="1218"/>
        <end position="1226"/>
    </location>
</feature>
<feature type="strand" evidence="5">
    <location>
        <begin position="1231"/>
        <end position="1233"/>
    </location>
</feature>
<feature type="strand" evidence="5">
    <location>
        <begin position="1235"/>
        <end position="1237"/>
    </location>
</feature>
<feature type="helix" evidence="5">
    <location>
        <begin position="1242"/>
        <end position="1255"/>
    </location>
</feature>
<feature type="strand" evidence="5">
    <location>
        <begin position="1257"/>
        <end position="1259"/>
    </location>
</feature>
<feature type="strand" evidence="5">
    <location>
        <begin position="1267"/>
        <end position="1269"/>
    </location>
</feature>
<feature type="helix" evidence="5">
    <location>
        <begin position="1280"/>
        <end position="1284"/>
    </location>
</feature>
<feature type="strand" evidence="5">
    <location>
        <begin position="1288"/>
        <end position="1291"/>
    </location>
</feature>
<feature type="strand" evidence="5">
    <location>
        <begin position="1297"/>
        <end position="1299"/>
    </location>
</feature>
<feature type="strand" evidence="5">
    <location>
        <begin position="1301"/>
        <end position="1303"/>
    </location>
</feature>
<feature type="helix" evidence="3">
    <location>
        <begin position="1309"/>
        <end position="1311"/>
    </location>
</feature>
<feature type="helix" evidence="5">
    <location>
        <begin position="1312"/>
        <end position="1320"/>
    </location>
</feature>
<feature type="helix" evidence="5">
    <location>
        <begin position="1321"/>
        <end position="1323"/>
    </location>
</feature>
<feature type="strand" evidence="5">
    <location>
        <begin position="1324"/>
        <end position="1326"/>
    </location>
</feature>
<feature type="turn" evidence="5">
    <location>
        <begin position="1333"/>
        <end position="1335"/>
    </location>
</feature>
<feature type="strand" evidence="5">
    <location>
        <begin position="1336"/>
        <end position="1342"/>
    </location>
</feature>
<feature type="strand" evidence="3">
    <location>
        <begin position="1353"/>
        <end position="1355"/>
    </location>
</feature>
<feature type="strand" evidence="5">
    <location>
        <begin position="1364"/>
        <end position="1370"/>
    </location>
</feature>
<feature type="strand" evidence="5">
    <location>
        <begin position="1373"/>
        <end position="1378"/>
    </location>
</feature>
<feature type="strand" evidence="5">
    <location>
        <begin position="1381"/>
        <end position="1384"/>
    </location>
</feature>
<feature type="strand" evidence="5">
    <location>
        <begin position="1387"/>
        <end position="1390"/>
    </location>
</feature>
<feature type="strand" evidence="5">
    <location>
        <begin position="1393"/>
        <end position="1400"/>
    </location>
</feature>
<feature type="strand" evidence="5">
    <location>
        <begin position="1413"/>
        <end position="1418"/>
    </location>
</feature>
<feature type="helix" evidence="5">
    <location>
        <begin position="1425"/>
        <end position="1432"/>
    </location>
</feature>
<feature type="strand" evidence="3">
    <location>
        <begin position="1436"/>
        <end position="1438"/>
    </location>
</feature>
<feature type="strand" evidence="5">
    <location>
        <begin position="1448"/>
        <end position="1461"/>
    </location>
</feature>
<feature type="strand" evidence="5">
    <location>
        <begin position="1463"/>
        <end position="1468"/>
    </location>
</feature>
<feature type="strand" evidence="5">
    <location>
        <begin position="1492"/>
        <end position="1496"/>
    </location>
</feature>
<feature type="helix" evidence="5">
    <location>
        <begin position="1498"/>
        <end position="1506"/>
    </location>
</feature>
<feature type="strand" evidence="4">
    <location>
        <begin position="1507"/>
        <end position="1509"/>
    </location>
</feature>
<feature type="strand" evidence="5">
    <location>
        <begin position="1520"/>
        <end position="1523"/>
    </location>
</feature>
<feature type="strand" evidence="5">
    <location>
        <begin position="1529"/>
        <end position="1531"/>
    </location>
</feature>
<feature type="helix" evidence="5">
    <location>
        <begin position="1537"/>
        <end position="1543"/>
    </location>
</feature>
<feature type="helix" evidence="5">
    <location>
        <begin position="1548"/>
        <end position="1551"/>
    </location>
</feature>
<feature type="helix" evidence="5">
    <location>
        <begin position="1553"/>
        <end position="1558"/>
    </location>
</feature>
<feature type="strand" evidence="5">
    <location>
        <begin position="1561"/>
        <end position="1563"/>
    </location>
</feature>
<feature type="helix" evidence="5">
    <location>
        <begin position="1568"/>
        <end position="1578"/>
    </location>
</feature>
<feature type="turn" evidence="5">
    <location>
        <begin position="1579"/>
        <end position="1581"/>
    </location>
</feature>
<feature type="strand" evidence="5">
    <location>
        <begin position="1582"/>
        <end position="1586"/>
    </location>
</feature>
<feature type="helix" evidence="4">
    <location>
        <begin position="1588"/>
        <end position="1590"/>
    </location>
</feature>
<feature type="strand" evidence="5">
    <location>
        <begin position="1595"/>
        <end position="1598"/>
    </location>
</feature>
<feature type="strand" evidence="5">
    <location>
        <begin position="1607"/>
        <end position="1611"/>
    </location>
</feature>
<feature type="strand" evidence="5">
    <location>
        <begin position="1618"/>
        <end position="1630"/>
    </location>
</feature>
<feature type="turn" evidence="5">
    <location>
        <begin position="1631"/>
        <end position="1633"/>
    </location>
</feature>
<feature type="strand" evidence="5">
    <location>
        <begin position="1636"/>
        <end position="1644"/>
    </location>
</feature>
<feature type="strand" evidence="5">
    <location>
        <begin position="1649"/>
        <end position="1653"/>
    </location>
</feature>
<feature type="turn" evidence="5">
    <location>
        <begin position="1661"/>
        <end position="1664"/>
    </location>
</feature>
<feature type="helix" evidence="5">
    <location>
        <begin position="1665"/>
        <end position="1670"/>
    </location>
</feature>
<feature type="helix" evidence="5">
    <location>
        <begin position="1672"/>
        <end position="1689"/>
    </location>
</feature>
<feature type="helix" evidence="5">
    <location>
        <begin position="1693"/>
        <end position="1698"/>
    </location>
</feature>
<feature type="strand" evidence="5">
    <location>
        <begin position="1702"/>
        <end position="1707"/>
    </location>
</feature>
<feature type="helix" evidence="5">
    <location>
        <begin position="1711"/>
        <end position="1722"/>
    </location>
</feature>
<feature type="strand" evidence="4">
    <location>
        <begin position="1737"/>
        <end position="1739"/>
    </location>
</feature>
<feature type="strand" evidence="5">
    <location>
        <begin position="1744"/>
        <end position="1746"/>
    </location>
</feature>
<feature type="strand" evidence="5">
    <location>
        <begin position="1749"/>
        <end position="1753"/>
    </location>
</feature>
<feature type="turn" evidence="5">
    <location>
        <begin position="1758"/>
        <end position="1760"/>
    </location>
</feature>
<feature type="helix" evidence="5">
    <location>
        <begin position="1762"/>
        <end position="1772"/>
    </location>
</feature>
<feature type="turn" evidence="5">
    <location>
        <begin position="1778"/>
        <end position="1782"/>
    </location>
</feature>
<feature type="strand" evidence="5">
    <location>
        <begin position="1788"/>
        <end position="1792"/>
    </location>
</feature>
<feature type="strand" evidence="5">
    <location>
        <begin position="1798"/>
        <end position="1802"/>
    </location>
</feature>
<feature type="turn" evidence="5">
    <location>
        <begin position="1803"/>
        <end position="1807"/>
    </location>
</feature>
<feature type="helix" evidence="5">
    <location>
        <begin position="1814"/>
        <end position="1827"/>
    </location>
</feature>
<feature type="strand" evidence="5">
    <location>
        <begin position="1839"/>
        <end position="1844"/>
    </location>
</feature>
<feature type="turn" evidence="5">
    <location>
        <begin position="1848"/>
        <end position="1850"/>
    </location>
</feature>
<feature type="helix" evidence="5">
    <location>
        <begin position="1856"/>
        <end position="1859"/>
    </location>
</feature>
<feature type="turn" evidence="5">
    <location>
        <begin position="1860"/>
        <end position="1866"/>
    </location>
</feature>
<feature type="helix" evidence="5">
    <location>
        <begin position="1867"/>
        <end position="1870"/>
    </location>
</feature>
<feature type="strand" evidence="5">
    <location>
        <begin position="1874"/>
        <end position="1878"/>
    </location>
</feature>
<feature type="turn" evidence="5">
    <location>
        <begin position="1880"/>
        <end position="1883"/>
    </location>
</feature>
<feature type="strand" evidence="5">
    <location>
        <begin position="1887"/>
        <end position="1891"/>
    </location>
</feature>
<feature type="helix" evidence="5">
    <location>
        <begin position="1892"/>
        <end position="1902"/>
    </location>
</feature>
<feature type="helix" evidence="5">
    <location>
        <begin position="1904"/>
        <end position="1907"/>
    </location>
</feature>
<feature type="helix" evidence="5">
    <location>
        <begin position="1912"/>
        <end position="1916"/>
    </location>
</feature>
<feature type="strand" evidence="5">
    <location>
        <begin position="1921"/>
        <end position="1923"/>
    </location>
</feature>
<feature type="helix" evidence="5">
    <location>
        <begin position="1928"/>
        <end position="1931"/>
    </location>
</feature>
<feature type="turn" evidence="5">
    <location>
        <begin position="1932"/>
        <end position="1934"/>
    </location>
</feature>
<feature type="helix" evidence="5">
    <location>
        <begin position="1935"/>
        <end position="1941"/>
    </location>
</feature>
<feature type="strand" evidence="3">
    <location>
        <begin position="1952"/>
        <end position="1956"/>
    </location>
</feature>
<feature type="turn" evidence="5">
    <location>
        <begin position="1964"/>
        <end position="1967"/>
    </location>
</feature>
<feature type="strand" evidence="5">
    <location>
        <begin position="1968"/>
        <end position="1972"/>
    </location>
</feature>
<feature type="strand" evidence="5">
    <location>
        <begin position="1977"/>
        <end position="1984"/>
    </location>
</feature>
<feature type="turn" evidence="5">
    <location>
        <begin position="1986"/>
        <end position="1988"/>
    </location>
</feature>
<feature type="helix" evidence="5">
    <location>
        <begin position="1991"/>
        <end position="1994"/>
    </location>
</feature>
<feature type="strand" evidence="5">
    <location>
        <begin position="2003"/>
        <end position="2006"/>
    </location>
</feature>
<feature type="helix" evidence="5">
    <location>
        <begin position="2011"/>
        <end position="2016"/>
    </location>
</feature>
<feature type="turn" evidence="5">
    <location>
        <begin position="2017"/>
        <end position="2019"/>
    </location>
</feature>
<feature type="helix" evidence="5">
    <location>
        <begin position="2025"/>
        <end position="2031"/>
    </location>
</feature>
<feature type="turn" evidence="3">
    <location>
        <begin position="2033"/>
        <end position="2036"/>
    </location>
</feature>
<comment type="function">
    <text>Fatty acid synthetase catalyzes the formation of long-chain fatty acids from acetyl-CoA, malonyl-CoA and NADPH. The beta subunit contains domains for: [acyl-carrier-protein] acetyltransferase and malonyltransferase, S-acyl fatty acid synthase thioesterase, enoyl-[acyl-carrier-protein] reductase, and 3-hydroxypalmitoyl-[acyl-carrier-protein] dehydratase.</text>
</comment>
<comment type="catalytic activity">
    <reaction>
        <text>acetyl-CoA + n malonyl-CoA + 2n NADPH + 4n H(+) = a long-chain-acyl-CoA + n CoA + n CO2 + 2n NADP(+).</text>
        <dbReference type="EC" id="2.3.1.86"/>
    </reaction>
</comment>
<comment type="catalytic activity">
    <reaction>
        <text>holo-[ACP] + acetyl-CoA = acetyl-[ACP] + CoA</text>
        <dbReference type="Rhea" id="RHEA:41788"/>
        <dbReference type="Rhea" id="RHEA-COMP:9621"/>
        <dbReference type="Rhea" id="RHEA-COMP:9685"/>
        <dbReference type="ChEBI" id="CHEBI:57287"/>
        <dbReference type="ChEBI" id="CHEBI:57288"/>
        <dbReference type="ChEBI" id="CHEBI:64479"/>
        <dbReference type="ChEBI" id="CHEBI:78446"/>
        <dbReference type="EC" id="2.3.1.38"/>
    </reaction>
</comment>
<comment type="catalytic activity">
    <reaction>
        <text>holo-[ACP] + malonyl-CoA = malonyl-[ACP] + CoA</text>
        <dbReference type="Rhea" id="RHEA:41792"/>
        <dbReference type="Rhea" id="RHEA-COMP:9623"/>
        <dbReference type="Rhea" id="RHEA-COMP:9685"/>
        <dbReference type="ChEBI" id="CHEBI:57287"/>
        <dbReference type="ChEBI" id="CHEBI:57384"/>
        <dbReference type="ChEBI" id="CHEBI:64479"/>
        <dbReference type="ChEBI" id="CHEBI:78449"/>
        <dbReference type="EC" id="2.3.1.39"/>
    </reaction>
</comment>
<comment type="catalytic activity">
    <reaction>
        <text>a (3R)-hydroxyacyl-[ACP] = a (2E)-enoyl-[ACP] + H2O</text>
        <dbReference type="Rhea" id="RHEA:13097"/>
        <dbReference type="Rhea" id="RHEA-COMP:9925"/>
        <dbReference type="Rhea" id="RHEA-COMP:9945"/>
        <dbReference type="ChEBI" id="CHEBI:15377"/>
        <dbReference type="ChEBI" id="CHEBI:78784"/>
        <dbReference type="ChEBI" id="CHEBI:78827"/>
        <dbReference type="EC" id="4.2.1.59"/>
    </reaction>
</comment>
<comment type="catalytic activity">
    <reaction>
        <text>a 2,3-saturated acyl-[ACP] + NAD(+) = a (2E)-enoyl-[ACP] + NADH + H(+)</text>
        <dbReference type="Rhea" id="RHEA:10240"/>
        <dbReference type="Rhea" id="RHEA-COMP:9925"/>
        <dbReference type="Rhea" id="RHEA-COMP:9926"/>
        <dbReference type="ChEBI" id="CHEBI:15378"/>
        <dbReference type="ChEBI" id="CHEBI:57540"/>
        <dbReference type="ChEBI" id="CHEBI:57945"/>
        <dbReference type="ChEBI" id="CHEBI:78784"/>
        <dbReference type="ChEBI" id="CHEBI:78785"/>
        <dbReference type="EC" id="1.3.1.9"/>
    </reaction>
</comment>
<comment type="catalytic activity">
    <reaction>
        <text>(9Z)-octadecenoyl-[ACP] + H2O = (9Z)-octadecenoate + holo-[ACP] + H(+)</text>
        <dbReference type="Rhea" id="RHEA:15057"/>
        <dbReference type="Rhea" id="RHEA-COMP:9685"/>
        <dbReference type="Rhea" id="RHEA-COMP:9924"/>
        <dbReference type="ChEBI" id="CHEBI:15377"/>
        <dbReference type="ChEBI" id="CHEBI:15378"/>
        <dbReference type="ChEBI" id="CHEBI:30823"/>
        <dbReference type="ChEBI" id="CHEBI:64479"/>
        <dbReference type="ChEBI" id="CHEBI:78783"/>
        <dbReference type="EC" id="3.1.2.14"/>
    </reaction>
</comment>
<comment type="subunit">
    <text>[Alpha(6)beta(6)] hexamers of two multifunctional subunits (alpha and beta).</text>
</comment>
<comment type="similarity">
    <text evidence="2">Belongs to the fungal fatty acid synthetase subunit beta family.</text>
</comment>
<gene>
    <name type="primary">FAS1</name>
</gene>
<accession>P34731</accession>
<sequence>MSTHRPFQLTHGSIEHTLLVPNDLFFNYSQLKDEFIKTLPEPTEGFAGDDEPSSPAELYGKFIGFISNAQFPQIVELSLKDFESRFLDNNNDNIHSFAVKLLDDETYPTTIAKVKENIVKNYYKAVKSINKVESNLLYHCKHDAKLVAIFGGQGNTDDYFEELRELYTLYQGLIEDLLVSIAEKLNQLHPSFDKIYTQGLNILSWLKHPETTPDQDYLLSVPVSCPVICVIQLCHYTITCKVLGLTPGEFRNSLKWSTGHSQGLVTAVTIAASDSWDSFLKNSLTAVSLLLFIGSRCLSTYPRTSLPPTMLQDSLDNGEGRPSPMLSVRDLSIKQVEKFIEQTNSHLPREKHIAISLINGARNLVLSGPPESLYGFNLNLRNQKAPMGLDQSRVPFSERKLKCSNRFLPIFAPFHSHLLADATELILDDVKEHGLSFEGLKIPVYDTFDGSDFQALKEPIIDRVVKLITELPVHWEEATNHKATHILDFGPGGVSGLGVLTHRNKEGTGARIILAGTLDSNPIDDEYGFKHEIFQTSADKAIKWAPDWLKELRPTLVKNSEGKIYVKTKFSQLLGRAPLMVAGMTPTTVNTDIVSASLNAGYHIELAGGGYFSPVMMTRAIDDIVSRIKPGYGLGINLIYVNPFMLQWGIPLIKDLREKGYPIQSLTIGAGVPSIEVATEYIEDLGLTHLGLKPGSVDAISQVIAIAKAHPTFPIVLQWTGGRGGGHHSFEDFHQPIIQMYSKIRRCSNIVLVAGSGFGSDEDTYPYLSGYWSEKFNYPPMPFDGVLFGSRVMTSKESHTSLAAKKLIVECKGVPDQQWEQTYKKPTGGIITVRSEMGEPIHKIATRGVMFWKELDDTIFNLPKNKLLDALNKKRDHIIKKLNNDFQKPWFGKNANGVCDLQEMTYKEVANRLVELMYVKKSHRWIDVSLRNMYGDFLRRVEERFTSSAGTVSLLQNFNQLNEPEQFTADFFEKFPQAGKQLISEEDCDYFLMLAARPGQKPVPFVPVLDERFEFFFKKDSLWQSEDLESVVDEDVQRTCILHGPVASQYTSKVDEPIGDILNSIHEGHIARLIKEEYAGDESKIPVVEYFGGKKPASVSATSVNIIDGNQVVYEIDSELPNKQEWLDLLAGTELNWLQAFISTDRIVQGSKHVSNPLHDILTPAKHSKVTIDKKTKKLTAFENIKGDLLPVVEIELVKPNTIQLSLIEHRTADTNPVALPFLYKYNPADGFAPILEIMEDRNERIKEFYWKLWFGSSVPYSNDINVEKAILGDEITISSQTISEFTHAIGNKCDAFVDRPGKATLAPMDFAIVIGWKAIIKAIFPKSVDGDLLKLVHLSNGYKMITGAAPLKKGDVVSTKAEIKAVLNQPSGKLVEVVGTIYREGKPVMEVTSQFLYRGEYNDYCNTFQKVTETPVQVAFKSAKDLAVLRSKEWFHLEKDVQFDVLTFRCESTYKFKSANVYSSIKTTGQVLLELPTKEVIQVGSVDYEAGTSYGNPVTDYLSRNGKTIEESVIFENAIPLSSGEELTSKAPGTNEPYAIVSGDYNPIHVSRVFAAYAKLPGTITHGMYSSASIRALVEEWAANNVAARVRAFKCDFVGMVLPNDTLQTTMEHVGMINGRKIIKVETRNVETELPVLIGEAEIEQPTTTYVFTGQGSQEQGMGMELYNSSEVAREVWDKADRHFVNNYGFSILDIVQNNPNELTIHFGGAKGRAIRDNYIGMMFETIGEDGALKSEKIFKDIDETTTSYTFVSPTGLLSATQFTQPALTLMEKAAYEDIKSKGLIPSDIMFAGHSLGEYSALSSLANVMPIESLVDVVFYRGMTMQVAVPRDELGRSNYGMVAVNPSRVSATFDDSALRFVVDEVANKTKWLLEIVNYNVENQQYVAAGDLRALDTLTNVLNVLKINKIDIVKLQEQMSIEKVKEHLYEIVDEVAAKSLAKPQPIDLERGFAVIPLKGISVPFHSSYLMSGVKPFQRFLCKKIPKSSVKPQDLIGKYIPNLTAKPFELTKEYFQSVYDLTKSEKIKSILDNWEQYE</sequence>
<proteinExistence type="evidence at protein level"/>
<organism>
    <name type="scientific">Candida albicans</name>
    <name type="common">Yeast</name>
    <dbReference type="NCBI Taxonomy" id="5476"/>
    <lineage>
        <taxon>Eukaryota</taxon>
        <taxon>Fungi</taxon>
        <taxon>Dikarya</taxon>
        <taxon>Ascomycota</taxon>
        <taxon>Saccharomycotina</taxon>
        <taxon>Pichiomycetes</taxon>
        <taxon>Debaryomycetaceae</taxon>
        <taxon>Candida/Lodderomyces clade</taxon>
        <taxon>Candida</taxon>
    </lineage>
</organism>
<evidence type="ECO:0000250" key="1"/>
<evidence type="ECO:0000305" key="2"/>
<evidence type="ECO:0007829" key="3">
    <source>
        <dbReference type="PDB" id="6U5V"/>
    </source>
</evidence>
<evidence type="ECO:0007829" key="4">
    <source>
        <dbReference type="PDB" id="6U5W"/>
    </source>
</evidence>
<evidence type="ECO:0007829" key="5">
    <source>
        <dbReference type="PDB" id="7TUI"/>
    </source>
</evidence>
<name>FAS1_CANAX</name>
<keyword id="KW-0002">3D-structure</keyword>
<keyword id="KW-0275">Fatty acid biosynthesis</keyword>
<keyword id="KW-0276">Fatty acid metabolism</keyword>
<keyword id="KW-0378">Hydrolase</keyword>
<keyword id="KW-0444">Lipid biosynthesis</keyword>
<keyword id="KW-0443">Lipid metabolism</keyword>
<keyword id="KW-0456">Lyase</keyword>
<keyword id="KW-0511">Multifunctional enzyme</keyword>
<keyword id="KW-0520">NAD</keyword>
<keyword id="KW-0521">NADP</keyword>
<keyword id="KW-0560">Oxidoreductase</keyword>
<keyword id="KW-0808">Transferase</keyword>
<protein>
    <recommendedName>
        <fullName>Fatty acid synthase subunit beta</fullName>
        <ecNumber>2.3.1.86</ecNumber>
    </recommendedName>
    <domain>
        <recommendedName>
            <fullName>3-hydroxyacyl-[acyl-carrier-protein] dehydratase</fullName>
            <ecNumber>4.2.1.59</ecNumber>
        </recommendedName>
    </domain>
    <domain>
        <recommendedName>
            <fullName>Enoyl-[acyl-carrier-protein] reductase [NADH]</fullName>
            <ecNumber>1.3.1.9</ecNumber>
        </recommendedName>
    </domain>
    <domain>
        <recommendedName>
            <fullName>[Acyl-carrier-protein] acetyltransferase</fullName>
            <ecNumber>2.3.1.38</ecNumber>
        </recommendedName>
    </domain>
    <domain>
        <recommendedName>
            <fullName>[Acyl-carrier-protein] malonyltransferase</fullName>
            <ecNumber>2.3.1.39</ecNumber>
        </recommendedName>
    </domain>
    <domain>
        <recommendedName>
            <fullName>S-acyl fatty acid synthase thioesterase</fullName>
            <ecNumber>3.1.2.14</ecNumber>
        </recommendedName>
    </domain>
</protein>